<dbReference type="EMBL" id="ABBA01040607">
    <property type="status" value="NOT_ANNOTATED_CDS"/>
    <property type="molecule type" value="Genomic_DNA"/>
</dbReference>
<dbReference type="SMR" id="A0A0B4J1V7"/>
<dbReference type="FunCoup" id="A0A0B4J1V7">
    <property type="interactions" value="298"/>
</dbReference>
<dbReference type="GlyCosmos" id="A0A0B4J1V7">
    <property type="glycosylation" value="1 site, No reported glycans"/>
</dbReference>
<dbReference type="GlyGen" id="A0A0B4J1V7">
    <property type="glycosylation" value="1 site"/>
</dbReference>
<dbReference type="BioMuta" id="IGHV7-81"/>
<dbReference type="MassIVE" id="A0A0B4J1V7"/>
<dbReference type="Ensembl" id="ENST00000390639.2">
    <property type="protein sequence ID" value="ENSP00000375048.2"/>
    <property type="gene ID" value="ENSG00000211979.2"/>
</dbReference>
<dbReference type="AGR" id="HGNC:5669"/>
<dbReference type="GeneCards" id="IGHV7-81"/>
<dbReference type="HGNC" id="HGNC:5669">
    <property type="gene designation" value="IGHV7-81"/>
</dbReference>
<dbReference type="HPA" id="ENSG00000211979">
    <property type="expression patterns" value="Tissue enhanced (intestine, lymphoid tissue, stomach)"/>
</dbReference>
<dbReference type="neXtProt" id="NX_A0A0B4J1V7"/>
<dbReference type="OpenTargets" id="ENSG00000211979"/>
<dbReference type="VEuPathDB" id="HostDB:ENSG00000211979"/>
<dbReference type="GeneTree" id="ENSGT00940000161255"/>
<dbReference type="HOGENOM" id="CLU_077975_5_2_1"/>
<dbReference type="InParanoid" id="A0A0B4J1V7"/>
<dbReference type="OMA" id="GWMNTYT"/>
<dbReference type="OrthoDB" id="9616621at2759"/>
<dbReference type="PAN-GO" id="A0A0B4J1V7">
    <property type="GO annotations" value="11 GO annotations based on evolutionary models"/>
</dbReference>
<dbReference type="PhylomeDB" id="A0A0B4J1V7"/>
<dbReference type="SignaLink" id="A0A0B4J1V7"/>
<dbReference type="ChiTaRS" id="IGHV7-81">
    <property type="organism name" value="human"/>
</dbReference>
<dbReference type="PRO" id="PR:A0A0B4J1V7"/>
<dbReference type="Proteomes" id="UP000005640">
    <property type="component" value="Chromosome 14"/>
</dbReference>
<dbReference type="RNAct" id="A0A0B4J1V7">
    <property type="molecule type" value="protein"/>
</dbReference>
<dbReference type="Bgee" id="ENSG00000211979">
    <property type="expression patterns" value="Expressed in rectum and 86 other cell types or tissues"/>
</dbReference>
<dbReference type="GO" id="GO:0005576">
    <property type="term" value="C:extracellular region"/>
    <property type="evidence" value="ECO:0007669"/>
    <property type="project" value="UniProtKB-SubCell"/>
</dbReference>
<dbReference type="GO" id="GO:0019814">
    <property type="term" value="C:immunoglobulin complex"/>
    <property type="evidence" value="ECO:0007669"/>
    <property type="project" value="UniProtKB-KW"/>
</dbReference>
<dbReference type="GO" id="GO:0005886">
    <property type="term" value="C:plasma membrane"/>
    <property type="evidence" value="ECO:0007669"/>
    <property type="project" value="UniProtKB-SubCell"/>
</dbReference>
<dbReference type="GO" id="GO:0003823">
    <property type="term" value="F:antigen binding"/>
    <property type="evidence" value="ECO:0000318"/>
    <property type="project" value="GO_Central"/>
</dbReference>
<dbReference type="GO" id="GO:0016064">
    <property type="term" value="P:immunoglobulin mediated immune response"/>
    <property type="evidence" value="ECO:0000318"/>
    <property type="project" value="GO_Central"/>
</dbReference>
<dbReference type="FunFam" id="2.60.40.10:FF:000556">
    <property type="entry name" value="Immunoglobulin heavy variable 7-81 (non-functional)"/>
    <property type="match status" value="1"/>
</dbReference>
<dbReference type="Gene3D" id="2.60.40.10">
    <property type="entry name" value="Immunoglobulins"/>
    <property type="match status" value="1"/>
</dbReference>
<dbReference type="InterPro" id="IPR007110">
    <property type="entry name" value="Ig-like_dom"/>
</dbReference>
<dbReference type="InterPro" id="IPR036179">
    <property type="entry name" value="Ig-like_dom_sf"/>
</dbReference>
<dbReference type="InterPro" id="IPR013783">
    <property type="entry name" value="Ig-like_fold"/>
</dbReference>
<dbReference type="InterPro" id="IPR013106">
    <property type="entry name" value="Ig_V-set"/>
</dbReference>
<dbReference type="InterPro" id="IPR050199">
    <property type="entry name" value="IgHV"/>
</dbReference>
<dbReference type="PANTHER" id="PTHR23266">
    <property type="entry name" value="IMMUNOGLOBULIN HEAVY CHAIN"/>
    <property type="match status" value="1"/>
</dbReference>
<dbReference type="Pfam" id="PF07686">
    <property type="entry name" value="V-set"/>
    <property type="match status" value="1"/>
</dbReference>
<dbReference type="SMART" id="SM00406">
    <property type="entry name" value="IGv"/>
    <property type="match status" value="1"/>
</dbReference>
<dbReference type="SUPFAM" id="SSF48726">
    <property type="entry name" value="Immunoglobulin"/>
    <property type="match status" value="1"/>
</dbReference>
<dbReference type="PROSITE" id="PS50835">
    <property type="entry name" value="IG_LIKE"/>
    <property type="match status" value="1"/>
</dbReference>
<feature type="signal peptide" evidence="2">
    <location>
        <begin position="1"/>
        <end position="19"/>
    </location>
</feature>
<feature type="chain" id="PRO_5002094079" description="Probable non-functional immunoglobulin heavy variable 7-81" evidence="2">
    <location>
        <begin position="20"/>
        <end position="117"/>
    </location>
</feature>
<feature type="domain" description="Ig-like" evidence="3">
    <location>
        <begin position="20"/>
        <end position="117" status="greater than"/>
    </location>
</feature>
<feature type="region of interest" description="Framework-1" evidence="1">
    <location>
        <begin position="20"/>
        <end position="44"/>
    </location>
</feature>
<feature type="region of interest" description="Complementarity-determining-1" evidence="1">
    <location>
        <begin position="45"/>
        <end position="52"/>
    </location>
</feature>
<feature type="region of interest" description="Framework-2" evidence="1">
    <location>
        <begin position="53"/>
        <end position="69"/>
    </location>
</feature>
<feature type="region of interest" description="Complementarity-determining-2" evidence="1">
    <location>
        <begin position="70"/>
        <end position="77"/>
    </location>
</feature>
<feature type="region of interest" description="Framework-3" evidence="1">
    <location>
        <begin position="78"/>
        <end position="115"/>
    </location>
</feature>
<feature type="region of interest" description="Complementarity-determining-3" evidence="1">
    <location>
        <begin position="116"/>
        <end position="117" status="greater than"/>
    </location>
</feature>
<feature type="glycosylation site" description="N-linked (GlcNAc...) asparagine" evidence="2">
    <location>
        <position position="76"/>
    </location>
</feature>
<feature type="disulfide bond" evidence="3">
    <location>
        <begin position="41"/>
        <end position="115"/>
    </location>
</feature>
<feature type="non-terminal residue">
    <location>
        <position position="117"/>
    </location>
</feature>
<accession>A0A0B4J1V7</accession>
<gene>
    <name evidence="4 10 12" type="primary">IGHV7-81</name>
</gene>
<protein>
    <recommendedName>
        <fullName evidence="11">Probable non-functional immunoglobulin heavy variable 7-81</fullName>
    </recommendedName>
</protein>
<proteinExistence type="evidence at protein level"/>
<reference key="1">
    <citation type="journal article" date="2003" name="Nature">
        <title>The DNA sequence and analysis of human chromosome 14.</title>
        <authorList>
            <person name="Heilig R."/>
            <person name="Eckenberg R."/>
            <person name="Petit J.-L."/>
            <person name="Fonknechten N."/>
            <person name="Da Silva C."/>
            <person name="Cattolico L."/>
            <person name="Levy M."/>
            <person name="Barbe V."/>
            <person name="De Berardinis V."/>
            <person name="Ureta-Vidal A."/>
            <person name="Pelletier E."/>
            <person name="Vico V."/>
            <person name="Anthouard V."/>
            <person name="Rowen L."/>
            <person name="Madan A."/>
            <person name="Qin S."/>
            <person name="Sun H."/>
            <person name="Du H."/>
            <person name="Pepin K."/>
            <person name="Artiguenave F."/>
            <person name="Robert C."/>
            <person name="Cruaud C."/>
            <person name="Bruels T."/>
            <person name="Jaillon O."/>
            <person name="Friedlander L."/>
            <person name="Samson G."/>
            <person name="Brottier P."/>
            <person name="Cure S."/>
            <person name="Segurens B."/>
            <person name="Aniere F."/>
            <person name="Samain S."/>
            <person name="Crespeau H."/>
            <person name="Abbasi N."/>
            <person name="Aiach N."/>
            <person name="Boscus D."/>
            <person name="Dickhoff R."/>
            <person name="Dors M."/>
            <person name="Dubois I."/>
            <person name="Friedman C."/>
            <person name="Gouyvenoux M."/>
            <person name="James R."/>
            <person name="Madan A."/>
            <person name="Mairey-Estrada B."/>
            <person name="Mangenot S."/>
            <person name="Martins N."/>
            <person name="Menard M."/>
            <person name="Oztas S."/>
            <person name="Ratcliffe A."/>
            <person name="Shaffer T."/>
            <person name="Trask B."/>
            <person name="Vacherie B."/>
            <person name="Bellemere C."/>
            <person name="Belser C."/>
            <person name="Besnard-Gonnet M."/>
            <person name="Bartol-Mavel D."/>
            <person name="Boutard M."/>
            <person name="Briez-Silla S."/>
            <person name="Combette S."/>
            <person name="Dufosse-Laurent V."/>
            <person name="Ferron C."/>
            <person name="Lechaplais C."/>
            <person name="Louesse C."/>
            <person name="Muselet D."/>
            <person name="Magdelenat G."/>
            <person name="Pateau E."/>
            <person name="Petit E."/>
            <person name="Sirvain-Trukniewicz P."/>
            <person name="Trybou A."/>
            <person name="Vega-Czarny N."/>
            <person name="Bataille E."/>
            <person name="Bluet E."/>
            <person name="Bordelais I."/>
            <person name="Dubois M."/>
            <person name="Dumont C."/>
            <person name="Guerin T."/>
            <person name="Haffray S."/>
            <person name="Hammadi R."/>
            <person name="Muanga J."/>
            <person name="Pellouin V."/>
            <person name="Robert D."/>
            <person name="Wunderle E."/>
            <person name="Gauguet G."/>
            <person name="Roy A."/>
            <person name="Sainte-Marthe L."/>
            <person name="Verdier J."/>
            <person name="Verdier-Discala C."/>
            <person name="Hillier L.W."/>
            <person name="Fulton L."/>
            <person name="McPherson J."/>
            <person name="Matsuda F."/>
            <person name="Wilson R."/>
            <person name="Scarpelli C."/>
            <person name="Gyapay G."/>
            <person name="Wincker P."/>
            <person name="Saurin W."/>
            <person name="Quetier F."/>
            <person name="Waterston R."/>
            <person name="Hood L."/>
            <person name="Weissenbach J."/>
        </authorList>
    </citation>
    <scope>NUCLEOTIDE SEQUENCE [LARGE SCALE GENOMIC DNA] (IMGT ALLELE IGHV7-81*01)</scope>
</reference>
<reference key="2">
    <citation type="journal article" date="1998" name="Exp. Clin. Immunogenet.">
        <title>IMGT (ImMunoGeneTics) locus on focus. A new section of Experimental and Clinical Immunogenetics.</title>
        <authorList>
            <person name="Lefranc M.P."/>
        </authorList>
    </citation>
    <scope>CHARACTERIZATION</scope>
</reference>
<reference key="3">
    <citation type="journal article" date="2001" name="Exp. Clin. Immunogenet.">
        <title>Nomenclature of the human immunoglobulin heavy (IGH) genes.</title>
        <authorList>
            <person name="Lefranc M.P."/>
        </authorList>
    </citation>
    <scope>NOMENCLATURE</scope>
</reference>
<reference key="4">
    <citation type="book" date="2001" name="The Immunoglobulin FactsBook.">
        <title>The Immunoglobulin FactsBook.</title>
        <editorList>
            <person name="Lefranc M.P."/>
            <person name="Lefranc G."/>
        </editorList>
        <authorList>
            <person name="Lefranc M.P."/>
            <person name="Lefranc G."/>
        </authorList>
    </citation>
    <scope>NOMENCLATURE</scope>
</reference>
<reference key="5">
    <citation type="journal article" date="2007" name="Annu. Rev. Genet.">
        <title>Immunoglobulin somatic hypermutation.</title>
        <authorList>
            <person name="Teng G."/>
            <person name="Papavasiliou F.N."/>
        </authorList>
    </citation>
    <scope>REVIEW ON SOMATIC HYPERMUTATION</scope>
</reference>
<reference key="6">
    <citation type="journal article" date="2010" name="J. Allergy Clin. Immunol.">
        <title>Structure and function of immunoglobulins.</title>
        <authorList>
            <person name="Schroeder H.W. Jr."/>
            <person name="Cavacini L."/>
        </authorList>
    </citation>
    <scope>REVIEW ON IMMUNOGLOBULINS</scope>
</reference>
<reference key="7">
    <citation type="journal article" date="2012" name="Nat. Rev. Immunol.">
        <title>Molecular programming of B cell memory.</title>
        <authorList>
            <person name="McHeyzer-Williams M."/>
            <person name="Okitsu S."/>
            <person name="Wang N."/>
            <person name="McHeyzer-Williams L."/>
        </authorList>
    </citation>
    <scope>REVIEW ON FUNCTION</scope>
</reference>
<reference key="8">
    <citation type="journal article" date="2014" name="Front. Immunol.">
        <title>Immunoglobulin and T Cell Receptor Genes: IMGT((R)) and the Birth and Rise of Immunoinformatics.</title>
        <authorList>
            <person name="Lefranc M.P."/>
        </authorList>
    </citation>
    <scope>NOMENCLATURE</scope>
</reference>
<evidence type="ECO:0000250" key="1">
    <source>
        <dbReference type="UniProtKB" id="P23083"/>
    </source>
</evidence>
<evidence type="ECO:0000255" key="2"/>
<evidence type="ECO:0000255" key="3">
    <source>
        <dbReference type="PROSITE-ProRule" id="PRU00114"/>
    </source>
</evidence>
<evidence type="ECO:0000303" key="4">
    <source>
    </source>
</evidence>
<evidence type="ECO:0000303" key="5">
    <source>
    </source>
</evidence>
<evidence type="ECO:0000303" key="6">
    <source>
    </source>
</evidence>
<evidence type="ECO:0000303" key="7">
    <source>
    </source>
</evidence>
<evidence type="ECO:0000303" key="8">
    <source>
    </source>
</evidence>
<evidence type="ECO:0000303" key="9">
    <source>
    </source>
</evidence>
<evidence type="ECO:0000303" key="10">
    <source ref="4"/>
</evidence>
<evidence type="ECO:0000305" key="11"/>
<evidence type="ECO:0000312" key="12">
    <source>
        <dbReference type="HGNC" id="HGNC:5669"/>
    </source>
</evidence>
<comment type="function">
    <text evidence="5 6 7 8 9">Probable non-functional open reading frame (ORF) of V region of the variable domain of immunoglobulin heavy chains (PubMed:24600447). Non-functional ORF generally cannot participate in the synthesis of a productive immunoglobulin chain due to altered V-(D)-J or switch recombination and/or splicing site (at mRNA level) and/or conserved amino acid change (protein level) (PubMed:9619395). Immunoglobulins, also known as antibodies, are membrane-bound or secreted glycoproteins produced by B lymphocytes. In the recognition phase of humoral immunity, the membrane-bound immunoglobulins serve as receptors which, upon binding of a specific antigen, trigger the clonal expansion and differentiation of B lymphocytes into immunoglobulins-secreting plasma cells. Secreted immunoglobulins mediate the effector phase of humoral immunity, which results in the elimination of bound antigens (PubMed:20176268, PubMed:22158414). The antigen binding site is formed by the variable domain of one heavy chain, together with that of its associated light chain. Thus, each immunoglobulin has two antigen binding sites with remarkable affinity for a particular antigen. The variable domains are assembled by a process called V-(D)-J rearrangement and can then be subjected to somatic hypermutations which, after exposure to antigen and selection, allow affinity maturation for a particular antigen (PubMed:17576170, PubMed:20176268).</text>
</comment>
<comment type="subunit">
    <text evidence="6">Immunoglobulins are composed of two identical heavy chains and two identical light chains; disulfide-linked.</text>
</comment>
<comment type="subcellular location">
    <subcellularLocation>
        <location evidence="6 7">Secreted</location>
    </subcellularLocation>
    <subcellularLocation>
        <location evidence="6 7">Cell membrane</location>
    </subcellularLocation>
</comment>
<comment type="polymorphism">
    <text evidence="11">There are several alleles. The sequence shown is that of IMGT allele IGHV7-81*01.</text>
</comment>
<comment type="caution">
    <text evidence="9 11">Most probably a non-functional protein that cannot participate in the synthesis of a productive immunoglobulin chain due to an unusual recombination signal (RS) sequence altering V-(D)-J recombination (PubMed:9619395).</text>
</comment>
<name>HV781_HUMAN</name>
<keyword id="KW-1064">Adaptive immunity</keyword>
<keyword id="KW-1003">Cell membrane</keyword>
<keyword id="KW-1015">Disulfide bond</keyword>
<keyword id="KW-0325">Glycoprotein</keyword>
<keyword id="KW-0391">Immunity</keyword>
<keyword id="KW-1280">Immunoglobulin</keyword>
<keyword id="KW-0393">Immunoglobulin domain</keyword>
<keyword id="KW-0472">Membrane</keyword>
<keyword id="KW-1267">Proteomics identification</keyword>
<keyword id="KW-1185">Reference proteome</keyword>
<keyword id="KW-0964">Secreted</keyword>
<keyword id="KW-0732">Signal</keyword>
<organism>
    <name type="scientific">Homo sapiens</name>
    <name type="common">Human</name>
    <dbReference type="NCBI Taxonomy" id="9606"/>
    <lineage>
        <taxon>Eukaryota</taxon>
        <taxon>Metazoa</taxon>
        <taxon>Chordata</taxon>
        <taxon>Craniata</taxon>
        <taxon>Vertebrata</taxon>
        <taxon>Euteleostomi</taxon>
        <taxon>Mammalia</taxon>
        <taxon>Eutheria</taxon>
        <taxon>Euarchontoglires</taxon>
        <taxon>Primates</taxon>
        <taxon>Haplorrhini</taxon>
        <taxon>Catarrhini</taxon>
        <taxon>Hominidae</taxon>
        <taxon>Homo</taxon>
    </lineage>
</organism>
<sequence>MDWTWSILFLVAAATGTYSQVQLVQSGHEVKQPGASVKVSCKASGYSFTTYGMNWVPQAPGQGLEWMGWFNTYTGNPTYAQGFTGRFVFSMDTSASTAYLQISSLKAEDMAMYYCAR</sequence>